<organism>
    <name type="scientific">Coxiella burnetii (strain Dugway 5J108-111)</name>
    <dbReference type="NCBI Taxonomy" id="434922"/>
    <lineage>
        <taxon>Bacteria</taxon>
        <taxon>Pseudomonadati</taxon>
        <taxon>Pseudomonadota</taxon>
        <taxon>Gammaproteobacteria</taxon>
        <taxon>Legionellales</taxon>
        <taxon>Coxiellaceae</taxon>
        <taxon>Coxiella</taxon>
    </lineage>
</organism>
<feature type="chain" id="PRO_1000081137" description="Protein RnfH">
    <location>
        <begin position="1"/>
        <end position="101"/>
    </location>
</feature>
<sequence>MISIIIAYATPEKQVEIPLTVEESCTLVVAVKRSGILQQFPEINLSQAIVGIHNKRTALDAGLRDGDRIEIYRPLTMDPKQARLLRAKRGKIRRMVRGEAG</sequence>
<gene>
    <name evidence="1" type="primary">rnfH</name>
    <name type="ordered locus">CBUD_1390</name>
</gene>
<name>RNFH_COXBN</name>
<reference key="1">
    <citation type="journal article" date="2009" name="Infect. Immun.">
        <title>Comparative genomics reveal extensive transposon-mediated genomic plasticity and diversity among potential effector proteins within the genus Coxiella.</title>
        <authorList>
            <person name="Beare P.A."/>
            <person name="Unsworth N."/>
            <person name="Andoh M."/>
            <person name="Voth D.E."/>
            <person name="Omsland A."/>
            <person name="Gilk S.D."/>
            <person name="Williams K.P."/>
            <person name="Sobral B.W."/>
            <person name="Kupko J.J. III"/>
            <person name="Porcella S.F."/>
            <person name="Samuel J.E."/>
            <person name="Heinzen R.A."/>
        </authorList>
    </citation>
    <scope>NUCLEOTIDE SEQUENCE [LARGE SCALE GENOMIC DNA]</scope>
    <source>
        <strain>Dugway 5J108-111</strain>
    </source>
</reference>
<proteinExistence type="inferred from homology"/>
<dbReference type="EMBL" id="CP000733">
    <property type="protein sequence ID" value="ABS78333.1"/>
    <property type="molecule type" value="Genomic_DNA"/>
</dbReference>
<dbReference type="RefSeq" id="WP_005773020.1">
    <property type="nucleotide sequence ID" value="NC_009727.1"/>
</dbReference>
<dbReference type="SMR" id="A9KGA1"/>
<dbReference type="KEGG" id="cbd:CBUD_1390"/>
<dbReference type="HOGENOM" id="CLU_150721_1_0_6"/>
<dbReference type="Proteomes" id="UP000008555">
    <property type="component" value="Chromosome"/>
</dbReference>
<dbReference type="Gene3D" id="3.10.20.280">
    <property type="entry name" value="RnfH-like"/>
    <property type="match status" value="1"/>
</dbReference>
<dbReference type="HAMAP" id="MF_00460">
    <property type="entry name" value="UPF0125_RnfH"/>
    <property type="match status" value="1"/>
</dbReference>
<dbReference type="InterPro" id="IPR016155">
    <property type="entry name" value="Mopterin_synth/thiamin_S_b"/>
</dbReference>
<dbReference type="InterPro" id="IPR005346">
    <property type="entry name" value="RnfH"/>
</dbReference>
<dbReference type="InterPro" id="IPR037021">
    <property type="entry name" value="RnfH_sf"/>
</dbReference>
<dbReference type="NCBIfam" id="NF002490">
    <property type="entry name" value="PRK01777.1"/>
    <property type="match status" value="1"/>
</dbReference>
<dbReference type="PANTHER" id="PTHR37483">
    <property type="entry name" value="UPF0125 PROTEIN RATB"/>
    <property type="match status" value="1"/>
</dbReference>
<dbReference type="PANTHER" id="PTHR37483:SF1">
    <property type="entry name" value="UPF0125 PROTEIN RATB"/>
    <property type="match status" value="1"/>
</dbReference>
<dbReference type="Pfam" id="PF03658">
    <property type="entry name" value="Ub-RnfH"/>
    <property type="match status" value="1"/>
</dbReference>
<dbReference type="SUPFAM" id="SSF54285">
    <property type="entry name" value="MoaD/ThiS"/>
    <property type="match status" value="1"/>
</dbReference>
<accession>A9KGA1</accession>
<comment type="similarity">
    <text evidence="1">Belongs to the UPF0125 (RnfH) family.</text>
</comment>
<evidence type="ECO:0000255" key="1">
    <source>
        <dbReference type="HAMAP-Rule" id="MF_00460"/>
    </source>
</evidence>
<protein>
    <recommendedName>
        <fullName evidence="1">Protein RnfH</fullName>
    </recommendedName>
</protein>